<proteinExistence type="evidence at transcript level"/>
<dbReference type="EMBL" id="AP005675">
    <property type="protein sequence ID" value="BAD33719.1"/>
    <property type="molecule type" value="Genomic_DNA"/>
</dbReference>
<dbReference type="EMBL" id="AP008215">
    <property type="protein sequence ID" value="BAF24911.1"/>
    <property type="molecule type" value="Genomic_DNA"/>
</dbReference>
<dbReference type="EMBL" id="AP014965">
    <property type="protein sequence ID" value="BAT07721.1"/>
    <property type="molecule type" value="Genomic_DNA"/>
</dbReference>
<dbReference type="EMBL" id="AK111875">
    <property type="status" value="NOT_ANNOTATED_CDS"/>
    <property type="molecule type" value="mRNA"/>
</dbReference>
<dbReference type="RefSeq" id="XP_015651291.1">
    <property type="nucleotide sequence ID" value="XM_015795805.1"/>
</dbReference>
<dbReference type="SMR" id="Q69NK8"/>
<dbReference type="FunCoup" id="Q69NK8">
    <property type="interactions" value="3413"/>
</dbReference>
<dbReference type="STRING" id="39947.Q69NK8"/>
<dbReference type="PaxDb" id="39947-Q69NK8"/>
<dbReference type="EnsemblPlants" id="Os09t0364000-01">
    <property type="protein sequence ID" value="Os09t0364000-01"/>
    <property type="gene ID" value="Os09g0364000"/>
</dbReference>
<dbReference type="Gramene" id="Os09t0364000-01">
    <property type="protein sequence ID" value="Os09t0364000-01"/>
    <property type="gene ID" value="Os09g0364000"/>
</dbReference>
<dbReference type="KEGG" id="dosa:Os09g0364000"/>
<dbReference type="eggNOG" id="KOG2476">
    <property type="taxonomic scope" value="Eukaryota"/>
</dbReference>
<dbReference type="HOGENOM" id="CLU_019955_2_0_1"/>
<dbReference type="InParanoid" id="Q69NK8"/>
<dbReference type="OMA" id="IVPITHY"/>
<dbReference type="OrthoDB" id="444325at2759"/>
<dbReference type="Proteomes" id="UP000000763">
    <property type="component" value="Chromosome 9"/>
</dbReference>
<dbReference type="Proteomes" id="UP000059680">
    <property type="component" value="Chromosome 9"/>
</dbReference>
<dbReference type="GO" id="GO:0071014">
    <property type="term" value="C:post-mRNA release spliceosomal complex"/>
    <property type="evidence" value="ECO:0000318"/>
    <property type="project" value="GO_Central"/>
</dbReference>
<dbReference type="GO" id="GO:0003677">
    <property type="term" value="F:DNA binding"/>
    <property type="evidence" value="ECO:0007669"/>
    <property type="project" value="UniProtKB-KW"/>
</dbReference>
<dbReference type="GO" id="GO:0061632">
    <property type="term" value="F:RNA lariat debranching enzyme activator activity"/>
    <property type="evidence" value="ECO:0000318"/>
    <property type="project" value="GO_Central"/>
</dbReference>
<dbReference type="GO" id="GO:0008270">
    <property type="term" value="F:zinc ion binding"/>
    <property type="evidence" value="ECO:0007669"/>
    <property type="project" value="UniProtKB-KW"/>
</dbReference>
<dbReference type="GO" id="GO:0000398">
    <property type="term" value="P:mRNA splicing, via spliceosome"/>
    <property type="evidence" value="ECO:0000318"/>
    <property type="project" value="GO_Central"/>
</dbReference>
<dbReference type="CDD" id="cd07380">
    <property type="entry name" value="MPP_CWF19_N"/>
    <property type="match status" value="1"/>
</dbReference>
<dbReference type="FunFam" id="3.30.428.10:FF:000018">
    <property type="entry name" value="Zinc finger CCCH domain-containing protein 59"/>
    <property type="match status" value="1"/>
</dbReference>
<dbReference type="Gene3D" id="6.10.250.3220">
    <property type="match status" value="1"/>
</dbReference>
<dbReference type="Gene3D" id="3.30.428.10">
    <property type="entry name" value="HIT-like"/>
    <property type="match status" value="1"/>
</dbReference>
<dbReference type="Gene3D" id="4.10.1000.10">
    <property type="entry name" value="Zinc finger, CCCH-type"/>
    <property type="match status" value="1"/>
</dbReference>
<dbReference type="InterPro" id="IPR040194">
    <property type="entry name" value="Cwf19-like"/>
</dbReference>
<dbReference type="InterPro" id="IPR006768">
    <property type="entry name" value="Cwf19-like_C_dom-1"/>
</dbReference>
<dbReference type="InterPro" id="IPR006767">
    <property type="entry name" value="Cwf19-like_C_dom-2"/>
</dbReference>
<dbReference type="InterPro" id="IPR036265">
    <property type="entry name" value="HIT-like_sf"/>
</dbReference>
<dbReference type="InterPro" id="IPR000571">
    <property type="entry name" value="Znf_CCCH"/>
</dbReference>
<dbReference type="InterPro" id="IPR036855">
    <property type="entry name" value="Znf_CCCH_sf"/>
</dbReference>
<dbReference type="PANTHER" id="PTHR12072">
    <property type="entry name" value="CWF19, CELL CYCLE CONTROL PROTEIN"/>
    <property type="match status" value="1"/>
</dbReference>
<dbReference type="PANTHER" id="PTHR12072:SF4">
    <property type="entry name" value="CWF19-LIKE PROTEIN 1"/>
    <property type="match status" value="1"/>
</dbReference>
<dbReference type="Pfam" id="PF04677">
    <property type="entry name" value="CwfJ_C_1"/>
    <property type="match status" value="1"/>
</dbReference>
<dbReference type="Pfam" id="PF04676">
    <property type="entry name" value="CwfJ_C_2"/>
    <property type="match status" value="1"/>
</dbReference>
<dbReference type="SMART" id="SM00356">
    <property type="entry name" value="ZnF_C3H1"/>
    <property type="match status" value="2"/>
</dbReference>
<dbReference type="SUPFAM" id="SSF90229">
    <property type="entry name" value="CCCH zinc finger"/>
    <property type="match status" value="2"/>
</dbReference>
<dbReference type="SUPFAM" id="SSF54197">
    <property type="entry name" value="HIT-like"/>
    <property type="match status" value="1"/>
</dbReference>
<dbReference type="PROSITE" id="PS50103">
    <property type="entry name" value="ZF_C3H1"/>
    <property type="match status" value="2"/>
</dbReference>
<protein>
    <recommendedName>
        <fullName>Zinc finger CCCH domain-containing protein 59</fullName>
        <shortName>OsC3H59</shortName>
    </recommendedName>
</protein>
<reference key="1">
    <citation type="journal article" date="2005" name="Nature">
        <title>The map-based sequence of the rice genome.</title>
        <authorList>
            <consortium name="International rice genome sequencing project (IRGSP)"/>
        </authorList>
    </citation>
    <scope>NUCLEOTIDE SEQUENCE [LARGE SCALE GENOMIC DNA]</scope>
    <source>
        <strain>cv. Nipponbare</strain>
    </source>
</reference>
<reference key="2">
    <citation type="journal article" date="2008" name="Nucleic Acids Res.">
        <title>The rice annotation project database (RAP-DB): 2008 update.</title>
        <authorList>
            <consortium name="The rice annotation project (RAP)"/>
        </authorList>
    </citation>
    <scope>GENOME REANNOTATION</scope>
    <source>
        <strain>cv. Nipponbare</strain>
    </source>
</reference>
<reference key="3">
    <citation type="journal article" date="2013" name="Rice">
        <title>Improvement of the Oryza sativa Nipponbare reference genome using next generation sequence and optical map data.</title>
        <authorList>
            <person name="Kawahara Y."/>
            <person name="de la Bastide M."/>
            <person name="Hamilton J.P."/>
            <person name="Kanamori H."/>
            <person name="McCombie W.R."/>
            <person name="Ouyang S."/>
            <person name="Schwartz D.C."/>
            <person name="Tanaka T."/>
            <person name="Wu J."/>
            <person name="Zhou S."/>
            <person name="Childs K.L."/>
            <person name="Davidson R.M."/>
            <person name="Lin H."/>
            <person name="Quesada-Ocampo L."/>
            <person name="Vaillancourt B."/>
            <person name="Sakai H."/>
            <person name="Lee S.S."/>
            <person name="Kim J."/>
            <person name="Numa H."/>
            <person name="Itoh T."/>
            <person name="Buell C.R."/>
            <person name="Matsumoto T."/>
        </authorList>
    </citation>
    <scope>GENOME REANNOTATION</scope>
    <source>
        <strain>cv. Nipponbare</strain>
    </source>
</reference>
<reference key="4">
    <citation type="journal article" date="2003" name="Science">
        <title>Collection, mapping, and annotation of over 28,000 cDNA clones from japonica rice.</title>
        <authorList>
            <consortium name="The rice full-length cDNA consortium"/>
        </authorList>
    </citation>
    <scope>NUCLEOTIDE SEQUENCE [LARGE SCALE MRNA]</scope>
    <source>
        <strain>cv. Nipponbare</strain>
    </source>
</reference>
<reference key="5">
    <citation type="journal article" date="2008" name="BMC Genomics">
        <title>Genome-wide analysis of CCCH zinc finger family in Arabidopsis and rice.</title>
        <authorList>
            <person name="Wang D."/>
            <person name="Guo Y."/>
            <person name="Wu C."/>
            <person name="Yang G."/>
            <person name="Li Y."/>
            <person name="Zheng C."/>
        </authorList>
    </citation>
    <scope>NOMENCLATURE</scope>
</reference>
<gene>
    <name type="ordered locus">Os09g0364000</name>
    <name type="ordered locus">LOC_Os09g19940</name>
    <name type="ORF">OJ1001_G09.14</name>
</gene>
<feature type="chain" id="PRO_0000346852" description="Zinc finger CCCH domain-containing protein 59">
    <location>
        <begin position="1"/>
        <end position="613"/>
    </location>
</feature>
<feature type="zinc finger region" description="C3H1-type 1" evidence="1">
    <location>
        <begin position="318"/>
        <end position="346"/>
    </location>
</feature>
<feature type="zinc finger region" description="C3H1-type 2" evidence="1">
    <location>
        <begin position="350"/>
        <end position="378"/>
    </location>
</feature>
<feature type="region of interest" description="Disordered" evidence="2">
    <location>
        <begin position="275"/>
        <end position="296"/>
    </location>
</feature>
<feature type="sequence conflict" description="In Ref. 4; AK111875." evidence="3" ref="4">
    <original>G</original>
    <variation>S</variation>
    <location>
        <position position="65"/>
    </location>
</feature>
<accession>Q69NK8</accession>
<accession>A0A0P0XMC4</accession>
<name>C3H59_ORYSJ</name>
<keyword id="KW-0238">DNA-binding</keyword>
<keyword id="KW-0479">Metal-binding</keyword>
<keyword id="KW-1185">Reference proteome</keyword>
<keyword id="KW-0677">Repeat</keyword>
<keyword id="KW-0862">Zinc</keyword>
<keyword id="KW-0863">Zinc-finger</keyword>
<evidence type="ECO:0000255" key="1">
    <source>
        <dbReference type="PROSITE-ProRule" id="PRU00723"/>
    </source>
</evidence>
<evidence type="ECO:0000256" key="2">
    <source>
        <dbReference type="SAM" id="MobiDB-lite"/>
    </source>
</evidence>
<evidence type="ECO:0000305" key="3"/>
<organism>
    <name type="scientific">Oryza sativa subsp. japonica</name>
    <name type="common">Rice</name>
    <dbReference type="NCBI Taxonomy" id="39947"/>
    <lineage>
        <taxon>Eukaryota</taxon>
        <taxon>Viridiplantae</taxon>
        <taxon>Streptophyta</taxon>
        <taxon>Embryophyta</taxon>
        <taxon>Tracheophyta</taxon>
        <taxon>Spermatophyta</taxon>
        <taxon>Magnoliopsida</taxon>
        <taxon>Liliopsida</taxon>
        <taxon>Poales</taxon>
        <taxon>Poaceae</taxon>
        <taxon>BOP clade</taxon>
        <taxon>Oryzoideae</taxon>
        <taxon>Oryzeae</taxon>
        <taxon>Oryzinae</taxon>
        <taxon>Oryza</taxon>
        <taxon>Oryza sativa</taxon>
    </lineage>
</organism>
<sequence>MAAAAASPSPATPPRILLAGDANGRLHQLFKRVTSVNQSTGPFHALLCVGQFFSPDAGDGDGGGGGEVADYLEGRAAVPIPTYFTGDYGPAAPRLLAKAASSARGFSPGGIQICPNLFWLRGSARFTLHGLSVVYLSGRKGPGGPGCYSQDDVDALRALAEEPGIVDLFLTNEWPAGVVNGVDTSNAPSQISDPHGYDPVVAELVAEIKPRYHIAGSKGVFYAREPYVSDSAAHVTRFIGLANVGNKEKQKFIHAISPTPASTMSSVDIHARPPNTTLSPYISPAKSVPVEETPKRPAEDADLQYWRYDVKKQRHGEAGGNRLCFKFTSSGSCPRGSKCNYRHDEEAREHYNRNVCFDFLNKGKCEKGPECRFAHSLSDEGAVRDTKPRSERRRVESSCWFCLSSPDVESHLVISIGEGYYCALAKGPLVPNHVLVIPVEHCSSTLKMPVEAEAELGRYKDALAKYFEKQGKIAIYFEWVSQQSRHANLQAVPVPLSKASSVKKIFHLAAQRLGFEFSVVNPDGDANRARELLRSECDSKSSLFYVELPEGSVLLHLVDSNEKFPAQFGREVLAGLLSMADRADWRNCKVSKEEEIQMVDDFKQGFREFDPAE</sequence>